<protein>
    <recommendedName>
        <fullName>Uncharacterized protein UL2</fullName>
    </recommendedName>
</protein>
<organism>
    <name type="scientific">Human cytomegalovirus (strain Merlin)</name>
    <name type="common">HHV-5</name>
    <name type="synonym">Human herpesvirus 5</name>
    <dbReference type="NCBI Taxonomy" id="295027"/>
    <lineage>
        <taxon>Viruses</taxon>
        <taxon>Duplodnaviria</taxon>
        <taxon>Heunggongvirae</taxon>
        <taxon>Peploviricota</taxon>
        <taxon>Herviviricetes</taxon>
        <taxon>Herpesvirales</taxon>
        <taxon>Orthoherpesviridae</taxon>
        <taxon>Betaherpesvirinae</taxon>
        <taxon>Cytomegalovirus</taxon>
        <taxon>Cytomegalovirus humanbeta5</taxon>
        <taxon>Human cytomegalovirus</taxon>
    </lineage>
</organism>
<name>UL02_HCMVM</name>
<comment type="subcellular location">
    <subcellularLocation>
        <location evidence="2">Host membrane</location>
        <topology evidence="2">Single-pass membrane protein</topology>
    </subcellularLocation>
</comment>
<comment type="similarity">
    <text evidence="2">Belongs to the HHV-5 UL2 protein family.</text>
</comment>
<organismHost>
    <name type="scientific">Homo sapiens</name>
    <name type="common">Human</name>
    <dbReference type="NCBI Taxonomy" id="9606"/>
</organismHost>
<proteinExistence type="inferred from homology"/>
<evidence type="ECO:0000255" key="1"/>
<evidence type="ECO:0000305" key="2"/>
<dbReference type="EMBL" id="AY446894">
    <property type="protein sequence ID" value="AAR31569.1"/>
    <property type="molecule type" value="Genomic_DNA"/>
</dbReference>
<dbReference type="RefSeq" id="YP_081463.1">
    <property type="nucleotide sequence ID" value="NC_006273.2"/>
</dbReference>
<dbReference type="DNASU" id="3077452"/>
<dbReference type="GeneID" id="3077452"/>
<dbReference type="KEGG" id="vg:3077452"/>
<dbReference type="Reactome" id="R-HSA-9610379">
    <property type="pathway name" value="HCMV Late Events"/>
</dbReference>
<dbReference type="Proteomes" id="UP000000938">
    <property type="component" value="Segment"/>
</dbReference>
<dbReference type="GO" id="GO:0033644">
    <property type="term" value="C:host cell membrane"/>
    <property type="evidence" value="ECO:0007669"/>
    <property type="project" value="UniProtKB-SubCell"/>
</dbReference>
<dbReference type="GO" id="GO:0016020">
    <property type="term" value="C:membrane"/>
    <property type="evidence" value="ECO:0007669"/>
    <property type="project" value="UniProtKB-KW"/>
</dbReference>
<dbReference type="InterPro" id="IPR013269">
    <property type="entry name" value="Herpes_UL2"/>
</dbReference>
<dbReference type="Pfam" id="PF08196">
    <property type="entry name" value="UL2"/>
    <property type="match status" value="1"/>
</dbReference>
<reference key="1">
    <citation type="journal article" date="2004" name="J. Gen. Virol.">
        <title>Genetic content of wild-type human cytomegalovirus.</title>
        <authorList>
            <person name="Dolan A."/>
            <person name="Cunningham C."/>
            <person name="Hector R.D."/>
            <person name="Hassan-Walker A.F."/>
            <person name="Lee L."/>
            <person name="Addison C."/>
            <person name="Dargan D.J."/>
            <person name="McGeoch D.J."/>
            <person name="Gatherer D."/>
            <person name="Emery V.C."/>
            <person name="Griffiths P.D."/>
            <person name="Sinzger C."/>
            <person name="McSharry B.P."/>
            <person name="Wilkinson G.W.G."/>
            <person name="Davison A.J."/>
        </authorList>
    </citation>
    <scope>NUCLEOTIDE SEQUENCE [LARGE SCALE GENOMIC DNA]</scope>
</reference>
<keyword id="KW-1043">Host membrane</keyword>
<keyword id="KW-0472">Membrane</keyword>
<keyword id="KW-1185">Reference proteome</keyword>
<keyword id="KW-0812">Transmembrane</keyword>
<keyword id="KW-1133">Transmembrane helix</keyword>
<gene>
    <name type="primary">UL2</name>
</gene>
<accession>Q6SWC7</accession>
<accession>D2K3H3</accession>
<sequence length="59" mass="6696">MAEDSVTILIVEDDDAYPSFGSLPASHAQYGFRLLRSIFLIMLVIWTAVWLKLLRDALL</sequence>
<feature type="chain" id="PRO_0000418239" description="Uncharacterized protein UL2">
    <location>
        <begin position="1"/>
        <end position="59"/>
    </location>
</feature>
<feature type="transmembrane region" description="Helical" evidence="1">
    <location>
        <begin position="32"/>
        <end position="54"/>
    </location>
</feature>